<protein>
    <recommendedName>
        <fullName>Probable phosphoribosylformylglycinamidine synthase</fullName>
        <shortName>FGAM synthase</shortName>
        <shortName>FGAMS</shortName>
        <ecNumber>6.3.5.3</ecNumber>
    </recommendedName>
    <alternativeName>
        <fullName>Formylglycinamide ribonucleotide amidotransferase</fullName>
        <shortName>FGAR amidotransferase</shortName>
        <shortName>FGAR-AT</shortName>
    </alternativeName>
    <alternativeName>
        <fullName>Formylglycinamide ribotide amidotransferase</fullName>
    </alternativeName>
</protein>
<organism>
    <name type="scientific">Caenorhabditis elegans</name>
    <dbReference type="NCBI Taxonomy" id="6239"/>
    <lineage>
        <taxon>Eukaryota</taxon>
        <taxon>Metazoa</taxon>
        <taxon>Ecdysozoa</taxon>
        <taxon>Nematoda</taxon>
        <taxon>Chromadorea</taxon>
        <taxon>Rhabditida</taxon>
        <taxon>Rhabditina</taxon>
        <taxon>Rhabditomorpha</taxon>
        <taxon>Rhabditoidea</taxon>
        <taxon>Rhabditidae</taxon>
        <taxon>Peloderinae</taxon>
        <taxon>Caenorhabditis</taxon>
    </lineage>
</organism>
<sequence>MTKFHVKLYAKAVESRKLDQIQKDFEKKFNRKIDVSVEYCYHVITQEPELISSNWEKLVTLLSHSPFETSVWKESQLHPEHGKNIEIGPRTAVKTAACTNILSIFESSGIKNVERIERGIRYLVEDDVDVNEFFEIAADKMTEAIYGNDVKFDDESHQIEKVFLIDVLESKQNLIKANEELGLALDQLDLDFYYDFFVNKVKKNPTDVELFDLAQSDSEHSRHWFFRGEIWIDDRKRDGSLMKTIRETLDSSNDNSLIAFCDNSSAIRGFESVCRLRPNDPTTVSPMIAIFPPSHLIYSAETHNFPTAVCPFQGATTGTGGRIRDIHATGRGAYEIAGTVGYSFGNLNLPGLPLPWEDETFEYPTSISEPAKIAIEASNGASDYGNKFGEPVISGFARSFGQRLENGERCEYLKPIMFSGGIGAIDKDEVRKEPCAPHQKVVKIGGPVYRIGVGGGAASSVSVQGNRENQLDFAAVQRGDAEMGGKLHRVVRACAERIGGNPLMAIHDQGAGGNGNVIKELVEGCGVTVKSDTFQLGDESISLRELWTAEYQENDAALVDASLLDALQTISKREKCHVSVVGEVEKEQRVKLLGKSGEIAVDLDTRQLGEREKKVFKLKSAPRVLKKLELPENLTVRKALKRVLMLPSVASKRYLTCKVDRSVTGLVAQQQCVGPLHTPLADVAVVALSHFDTVGGAVSLGEQPIKMLIDAEKGARMCIAETIMNLIWAPITDLKDVKMSGNWMWAAKCDGEGARLVDAVGALCRGLREIGCAIDGGKDSLSMAVTAHGEVVKSPGTLVLSAYAPCTNVTKVVNPSLKAVPGSKILWIKIGSSEEKMRLGGSALAQVYSQIGDDCPDIENFSEISKVFSIVQQLLNREELAGPLRKPIILAGHDISDGGLLTAILEMAFAGNVSIDIDIKPPNQNIKPIDILFAEECGILLEVSNPENVLHIFSEAGIKCQEIGKASAVFGPDAHVKIHVNGHLEINEKLVDLREEWELVGDRLGEFQTNPKSLKEAREVRRTCQKINYKCDFDWYYNPAFIHNEQYFSTAPRVAIIREEGSNGDREMASAFTLAGFQTFDVTMTDILAGHTLEAYRGVAFVGGFSYADVLGSAKGWAAGVQFNESVSKQFEAFRSRPDTFSYGVCNGCQLMAQLGWIGDEEQKGPTVFLDENECGRFDSSFGPVKIEKNVSIMLSGMENSVLGLWSSHGEGRFTYRNLQNFQNLKTNGQVCIRFCDDRGMTGADHGSVKLPYPWNPNGSIDDVAAICSRDGRHLAMMPHADRSFLTWQWAESSEVPWNARFDQKTVALSPWIKMFRNAYNWCL</sequence>
<gene>
    <name evidence="4" type="primary">pfas-1</name>
    <name evidence="4" type="ORF">F10F2.2</name>
</gene>
<reference key="1">
    <citation type="journal article" date="1998" name="Science">
        <title>Genome sequence of the nematode C. elegans: a platform for investigating biology.</title>
        <authorList>
            <consortium name="The C. elegans sequencing consortium"/>
        </authorList>
    </citation>
    <scope>NUCLEOTIDE SEQUENCE [LARGE SCALE GENOMIC DNA]</scope>
    <source>
        <strain>Bristol N2</strain>
    </source>
</reference>
<keyword id="KW-0067">ATP-binding</keyword>
<keyword id="KW-0963">Cytoplasm</keyword>
<keyword id="KW-0315">Glutamine amidotransferase</keyword>
<keyword id="KW-0436">Ligase</keyword>
<keyword id="KW-0460">Magnesium</keyword>
<keyword id="KW-0479">Metal-binding</keyword>
<keyword id="KW-0547">Nucleotide-binding</keyword>
<keyword id="KW-0658">Purine biosynthesis</keyword>
<keyword id="KW-1185">Reference proteome</keyword>
<dbReference type="EC" id="6.3.5.3"/>
<dbReference type="EMBL" id="BX284603">
    <property type="protein sequence ID" value="CAA84656.2"/>
    <property type="molecule type" value="Genomic_DNA"/>
</dbReference>
<dbReference type="PIR" id="T20718">
    <property type="entry name" value="T20718"/>
</dbReference>
<dbReference type="RefSeq" id="NP_497942.2">
    <property type="nucleotide sequence ID" value="NM_065541.8"/>
</dbReference>
<dbReference type="SMR" id="Q19311"/>
<dbReference type="BioGRID" id="40844">
    <property type="interactions" value="8"/>
</dbReference>
<dbReference type="FunCoup" id="Q19311">
    <property type="interactions" value="3250"/>
</dbReference>
<dbReference type="IntAct" id="Q19311">
    <property type="interactions" value="1"/>
</dbReference>
<dbReference type="MINT" id="Q19311"/>
<dbReference type="STRING" id="6239.F10F2.2.1"/>
<dbReference type="iPTMnet" id="Q19311"/>
<dbReference type="PaxDb" id="6239-F10F2.2"/>
<dbReference type="PeptideAtlas" id="Q19311"/>
<dbReference type="EnsemblMetazoa" id="F10F2.2.1">
    <property type="protein sequence ID" value="F10F2.2.1"/>
    <property type="gene ID" value="WBGene00008654"/>
</dbReference>
<dbReference type="GeneID" id="175608"/>
<dbReference type="KEGG" id="cel:CELE_F10F2.2"/>
<dbReference type="UCSC" id="F10F2.2">
    <property type="organism name" value="c. elegans"/>
</dbReference>
<dbReference type="AGR" id="WB:WBGene00008654"/>
<dbReference type="CTD" id="175608"/>
<dbReference type="WormBase" id="F10F2.2">
    <property type="protein sequence ID" value="CE44312"/>
    <property type="gene ID" value="WBGene00008654"/>
    <property type="gene designation" value="pfas-1"/>
</dbReference>
<dbReference type="eggNOG" id="KOG1907">
    <property type="taxonomic scope" value="Eukaryota"/>
</dbReference>
<dbReference type="GeneTree" id="ENSGT00390000007600"/>
<dbReference type="HOGENOM" id="CLU_001031_0_0_1"/>
<dbReference type="InParanoid" id="Q19311"/>
<dbReference type="OMA" id="LSANWMW"/>
<dbReference type="OrthoDB" id="6666987at2759"/>
<dbReference type="PhylomeDB" id="Q19311"/>
<dbReference type="Reactome" id="R-CEL-73817">
    <property type="pathway name" value="Purine ribonucleoside monophosphate biosynthesis"/>
</dbReference>
<dbReference type="UniPathway" id="UPA00074">
    <property type="reaction ID" value="UER00128"/>
</dbReference>
<dbReference type="PRO" id="PR:Q19311"/>
<dbReference type="Proteomes" id="UP000001940">
    <property type="component" value="Chromosome III"/>
</dbReference>
<dbReference type="Bgee" id="WBGene00008654">
    <property type="expression patterns" value="Expressed in material anatomical entity and 3 other cell types or tissues"/>
</dbReference>
<dbReference type="GO" id="GO:0005737">
    <property type="term" value="C:cytoplasm"/>
    <property type="evidence" value="ECO:0000318"/>
    <property type="project" value="GO_Central"/>
</dbReference>
<dbReference type="GO" id="GO:0005524">
    <property type="term" value="F:ATP binding"/>
    <property type="evidence" value="ECO:0007669"/>
    <property type="project" value="UniProtKB-KW"/>
</dbReference>
<dbReference type="GO" id="GO:0046872">
    <property type="term" value="F:metal ion binding"/>
    <property type="evidence" value="ECO:0007669"/>
    <property type="project" value="UniProtKB-KW"/>
</dbReference>
<dbReference type="GO" id="GO:0004642">
    <property type="term" value="F:phosphoribosylformylglycinamidine synthase activity"/>
    <property type="evidence" value="ECO:0000318"/>
    <property type="project" value="GO_Central"/>
</dbReference>
<dbReference type="GO" id="GO:0006189">
    <property type="term" value="P:'de novo' IMP biosynthetic process"/>
    <property type="evidence" value="ECO:0007669"/>
    <property type="project" value="UniProtKB-UniPathway"/>
</dbReference>
<dbReference type="GO" id="GO:0006164">
    <property type="term" value="P:purine nucleotide biosynthetic process"/>
    <property type="evidence" value="ECO:0000318"/>
    <property type="project" value="GO_Central"/>
</dbReference>
<dbReference type="CDD" id="cd01740">
    <property type="entry name" value="GATase1_FGAR_AT"/>
    <property type="match status" value="1"/>
</dbReference>
<dbReference type="CDD" id="cd02203">
    <property type="entry name" value="PurL_repeat1"/>
    <property type="match status" value="1"/>
</dbReference>
<dbReference type="CDD" id="cd02204">
    <property type="entry name" value="PurL_repeat2"/>
    <property type="match status" value="1"/>
</dbReference>
<dbReference type="FunFam" id="3.90.650.10:FF:000018">
    <property type="entry name" value="Phosphoribosylformylglycinamidine synthase"/>
    <property type="match status" value="1"/>
</dbReference>
<dbReference type="FunFam" id="3.30.1330.10:FF:000007">
    <property type="entry name" value="Phosphoribosylformylglycinamidine synthase, putative"/>
    <property type="match status" value="1"/>
</dbReference>
<dbReference type="FunFam" id="3.90.650.10:FF:000042">
    <property type="entry name" value="Probable phosphoribosylformylglycinamidine synthase"/>
    <property type="match status" value="1"/>
</dbReference>
<dbReference type="Gene3D" id="3.40.50.880">
    <property type="match status" value="1"/>
</dbReference>
<dbReference type="Gene3D" id="1.10.8.750">
    <property type="entry name" value="Phosphoribosylformylglycinamidine synthase, linker domain"/>
    <property type="match status" value="1"/>
</dbReference>
<dbReference type="Gene3D" id="3.90.650.10">
    <property type="entry name" value="PurM-like C-terminal domain"/>
    <property type="match status" value="2"/>
</dbReference>
<dbReference type="Gene3D" id="3.30.1330.10">
    <property type="entry name" value="PurM-like, N-terminal domain"/>
    <property type="match status" value="2"/>
</dbReference>
<dbReference type="HAMAP" id="MF_00419">
    <property type="entry name" value="PurL_1"/>
    <property type="match status" value="1"/>
</dbReference>
<dbReference type="InterPro" id="IPR029062">
    <property type="entry name" value="Class_I_gatase-like"/>
</dbReference>
<dbReference type="InterPro" id="IPR040707">
    <property type="entry name" value="FGAR-AT_N"/>
</dbReference>
<dbReference type="InterPro" id="IPR055181">
    <property type="entry name" value="FGAR-AT_PurM_N-like"/>
</dbReference>
<dbReference type="InterPro" id="IPR010073">
    <property type="entry name" value="PurL_large"/>
</dbReference>
<dbReference type="InterPro" id="IPR041609">
    <property type="entry name" value="PurL_linker"/>
</dbReference>
<dbReference type="InterPro" id="IPR010918">
    <property type="entry name" value="PurM-like_C_dom"/>
</dbReference>
<dbReference type="InterPro" id="IPR036676">
    <property type="entry name" value="PurM-like_C_sf"/>
</dbReference>
<dbReference type="InterPro" id="IPR036921">
    <property type="entry name" value="PurM-like_N_sf"/>
</dbReference>
<dbReference type="InterPro" id="IPR036604">
    <property type="entry name" value="PurS-like_sf"/>
</dbReference>
<dbReference type="NCBIfam" id="TIGR01735">
    <property type="entry name" value="FGAM_synt"/>
    <property type="match status" value="1"/>
</dbReference>
<dbReference type="NCBIfam" id="NF003672">
    <property type="entry name" value="PRK05297.1"/>
    <property type="match status" value="1"/>
</dbReference>
<dbReference type="PANTHER" id="PTHR10099">
    <property type="entry name" value="PHOSPHORIBOSYLFORMYLGLYCINAMIDINE SYNTHASE"/>
    <property type="match status" value="1"/>
</dbReference>
<dbReference type="PANTHER" id="PTHR10099:SF1">
    <property type="entry name" value="PHOSPHORIBOSYLFORMYLGLYCINAMIDINE SYNTHASE"/>
    <property type="match status" value="1"/>
</dbReference>
<dbReference type="Pfam" id="PF02769">
    <property type="entry name" value="AIRS_C"/>
    <property type="match status" value="2"/>
</dbReference>
<dbReference type="Pfam" id="PF18072">
    <property type="entry name" value="FGAR-AT_linker"/>
    <property type="match status" value="1"/>
</dbReference>
<dbReference type="Pfam" id="PF18076">
    <property type="entry name" value="FGAR-AT_N"/>
    <property type="match status" value="1"/>
</dbReference>
<dbReference type="Pfam" id="PF22689">
    <property type="entry name" value="FGAR-AT_PurM_N-like"/>
    <property type="match status" value="1"/>
</dbReference>
<dbReference type="Pfam" id="PF13507">
    <property type="entry name" value="GATase_5"/>
    <property type="match status" value="1"/>
</dbReference>
<dbReference type="SMART" id="SM01211">
    <property type="entry name" value="GATase_5"/>
    <property type="match status" value="1"/>
</dbReference>
<dbReference type="SUPFAM" id="SSF52317">
    <property type="entry name" value="Class I glutamine amidotransferase-like"/>
    <property type="match status" value="1"/>
</dbReference>
<dbReference type="SUPFAM" id="SSF109736">
    <property type="entry name" value="FGAM synthase PurL, linker domain"/>
    <property type="match status" value="1"/>
</dbReference>
<dbReference type="SUPFAM" id="SSF56042">
    <property type="entry name" value="PurM C-terminal domain-like"/>
    <property type="match status" value="2"/>
</dbReference>
<dbReference type="SUPFAM" id="SSF55326">
    <property type="entry name" value="PurM N-terminal domain-like"/>
    <property type="match status" value="2"/>
</dbReference>
<dbReference type="SUPFAM" id="SSF82697">
    <property type="entry name" value="PurS-like"/>
    <property type="match status" value="1"/>
</dbReference>
<dbReference type="PROSITE" id="PS51273">
    <property type="entry name" value="GATASE_TYPE_1"/>
    <property type="match status" value="1"/>
</dbReference>
<accession>Q19311</accession>
<feature type="chain" id="PRO_0000100402" description="Probable phosphoribosylformylglycinamidine synthase">
    <location>
        <begin position="1"/>
        <end position="1324"/>
    </location>
</feature>
<feature type="domain" description="Glutamine amidotransferase type-1">
    <location>
        <begin position="1053"/>
        <end position="1295"/>
    </location>
</feature>
<feature type="active site" description="Nucleophile" evidence="1">
    <location>
        <position position="1146"/>
    </location>
</feature>
<feature type="active site" evidence="1">
    <location>
        <position position="1280"/>
    </location>
</feature>
<feature type="active site" evidence="1">
    <location>
        <position position="1282"/>
    </location>
</feature>
<feature type="binding site" evidence="2">
    <location>
        <begin position="314"/>
        <end position="325"/>
    </location>
    <ligand>
        <name>ATP</name>
        <dbReference type="ChEBI" id="CHEBI:30616"/>
    </ligand>
</feature>
<feature type="binding site" evidence="1">
    <location>
        <begin position="394"/>
        <end position="396"/>
    </location>
    <ligand>
        <name>ATP</name>
        <dbReference type="ChEBI" id="CHEBI:30616"/>
    </ligand>
</feature>
<feature type="binding site" evidence="1">
    <location>
        <position position="681"/>
    </location>
    <ligand>
        <name>ATP</name>
        <dbReference type="ChEBI" id="CHEBI:30616"/>
    </ligand>
</feature>
<feature type="binding site" evidence="1">
    <location>
        <position position="682"/>
    </location>
    <ligand>
        <name>Mg(2+)</name>
        <dbReference type="ChEBI" id="CHEBI:18420"/>
    </ligand>
</feature>
<feature type="binding site" evidence="1">
    <location>
        <position position="721"/>
    </location>
    <ligand>
        <name>Mg(2+)</name>
        <dbReference type="ChEBI" id="CHEBI:18420"/>
    </ligand>
</feature>
<feature type="binding site" evidence="1">
    <location>
        <position position="725"/>
    </location>
    <ligand>
        <name>Mg(2+)</name>
        <dbReference type="ChEBI" id="CHEBI:18420"/>
    </ligand>
</feature>
<feature type="binding site" evidence="1">
    <location>
        <position position="894"/>
    </location>
    <ligand>
        <name>Mg(2+)</name>
        <dbReference type="ChEBI" id="CHEBI:18420"/>
    </ligand>
</feature>
<feature type="binding site" evidence="1">
    <location>
        <position position="896"/>
    </location>
    <ligand>
        <name>ATP</name>
        <dbReference type="ChEBI" id="CHEBI:30616"/>
    </ligand>
</feature>
<name>PUR4_CAEEL</name>
<comment type="function">
    <text evidence="1">Phosphoribosylformylglycinamidine synthase involved in the purines biosynthetic pathway. Catalyzes the ATP-dependent conversion of formylglycinamide ribonucleotide (FGAR) and glutamine to yield formylglycinamidine ribonucleotide (FGAM) and glutamate (By similarity).</text>
</comment>
<comment type="catalytic activity">
    <reaction>
        <text>N(2)-formyl-N(1)-(5-phospho-beta-D-ribosyl)glycinamide + L-glutamine + ATP + H2O = 2-formamido-N(1)-(5-O-phospho-beta-D-ribosyl)acetamidine + L-glutamate + ADP + phosphate + H(+)</text>
        <dbReference type="Rhea" id="RHEA:17129"/>
        <dbReference type="ChEBI" id="CHEBI:15377"/>
        <dbReference type="ChEBI" id="CHEBI:15378"/>
        <dbReference type="ChEBI" id="CHEBI:29985"/>
        <dbReference type="ChEBI" id="CHEBI:30616"/>
        <dbReference type="ChEBI" id="CHEBI:43474"/>
        <dbReference type="ChEBI" id="CHEBI:58359"/>
        <dbReference type="ChEBI" id="CHEBI:147286"/>
        <dbReference type="ChEBI" id="CHEBI:147287"/>
        <dbReference type="ChEBI" id="CHEBI:456216"/>
        <dbReference type="EC" id="6.3.5.3"/>
    </reaction>
</comment>
<comment type="pathway">
    <text>Purine metabolism; IMP biosynthesis via de novo pathway; 5-amino-1-(5-phospho-D-ribosyl)imidazole from N(2)-formyl-N(1)-(5-phospho-D-ribosyl)glycinamide: step 1/2.</text>
</comment>
<comment type="subcellular location">
    <subcellularLocation>
        <location evidence="1">Cytoplasm</location>
    </subcellularLocation>
</comment>
<comment type="similarity">
    <text evidence="3">In the N-terminal section; belongs to the FGAMS family.</text>
</comment>
<evidence type="ECO:0000250" key="1"/>
<evidence type="ECO:0000255" key="2"/>
<evidence type="ECO:0000305" key="3"/>
<evidence type="ECO:0000312" key="4">
    <source>
        <dbReference type="WormBase" id="F10F2.2"/>
    </source>
</evidence>
<proteinExistence type="inferred from homology"/>